<comment type="function">
    <text evidence="1">Catalyzes the conversion of GTP to 2,5-diamino-6-ribosylamino-4(3H)-pyrimidinone 5'-phosphate (DARP), formate and pyrophosphate.</text>
</comment>
<comment type="catalytic activity">
    <reaction evidence="1">
        <text>GTP + 4 H2O = 2,5-diamino-6-hydroxy-4-(5-phosphoribosylamino)-pyrimidine + formate + 2 phosphate + 3 H(+)</text>
        <dbReference type="Rhea" id="RHEA:23704"/>
        <dbReference type="ChEBI" id="CHEBI:15377"/>
        <dbReference type="ChEBI" id="CHEBI:15378"/>
        <dbReference type="ChEBI" id="CHEBI:15740"/>
        <dbReference type="ChEBI" id="CHEBI:37565"/>
        <dbReference type="ChEBI" id="CHEBI:43474"/>
        <dbReference type="ChEBI" id="CHEBI:58614"/>
        <dbReference type="EC" id="3.5.4.25"/>
    </reaction>
</comment>
<comment type="cofactor">
    <cofactor evidence="1">
        <name>Zn(2+)</name>
        <dbReference type="ChEBI" id="CHEBI:29105"/>
    </cofactor>
    <text evidence="1">Binds 1 zinc ion per subunit.</text>
</comment>
<comment type="pathway">
    <text evidence="1">Cofactor biosynthesis; riboflavin biosynthesis; 5-amino-6-(D-ribitylamino)uracil from GTP: step 1/4.</text>
</comment>
<comment type="similarity">
    <text evidence="1">Belongs to the GTP cyclohydrolase II family.</text>
</comment>
<reference key="1">
    <citation type="submission" date="2007-05" db="EMBL/GenBank/DDBJ databases">
        <title>Complete sequence of Pseudomonas putida F1.</title>
        <authorList>
            <consortium name="US DOE Joint Genome Institute"/>
            <person name="Copeland A."/>
            <person name="Lucas S."/>
            <person name="Lapidus A."/>
            <person name="Barry K."/>
            <person name="Detter J.C."/>
            <person name="Glavina del Rio T."/>
            <person name="Hammon N."/>
            <person name="Israni S."/>
            <person name="Dalin E."/>
            <person name="Tice H."/>
            <person name="Pitluck S."/>
            <person name="Chain P."/>
            <person name="Malfatti S."/>
            <person name="Shin M."/>
            <person name="Vergez L."/>
            <person name="Schmutz J."/>
            <person name="Larimer F."/>
            <person name="Land M."/>
            <person name="Hauser L."/>
            <person name="Kyrpides N."/>
            <person name="Lykidis A."/>
            <person name="Parales R."/>
            <person name="Richardson P."/>
        </authorList>
    </citation>
    <scope>NUCLEOTIDE SEQUENCE [LARGE SCALE GENOMIC DNA]</scope>
    <source>
        <strain>ATCC 700007 / DSM 6899 / JCM 31910 / BCRC 17059 / LMG 24140 / F1</strain>
    </source>
</reference>
<proteinExistence type="inferred from homology"/>
<name>RIBA_PSEP1</name>
<organism>
    <name type="scientific">Pseudomonas putida (strain ATCC 700007 / DSM 6899 / JCM 31910 / BCRC 17059 / LMG 24140 / F1)</name>
    <dbReference type="NCBI Taxonomy" id="351746"/>
    <lineage>
        <taxon>Bacteria</taxon>
        <taxon>Pseudomonadati</taxon>
        <taxon>Pseudomonadota</taxon>
        <taxon>Gammaproteobacteria</taxon>
        <taxon>Pseudomonadales</taxon>
        <taxon>Pseudomonadaceae</taxon>
        <taxon>Pseudomonas</taxon>
    </lineage>
</organism>
<dbReference type="EC" id="3.5.4.25" evidence="1"/>
<dbReference type="EMBL" id="CP000712">
    <property type="protein sequence ID" value="ABQ76725.1"/>
    <property type="molecule type" value="Genomic_DNA"/>
</dbReference>
<dbReference type="SMR" id="A5VXW5"/>
<dbReference type="KEGG" id="ppf:Pput_0557"/>
<dbReference type="eggNOG" id="COG0807">
    <property type="taxonomic scope" value="Bacteria"/>
</dbReference>
<dbReference type="HOGENOM" id="CLU_020273_2_1_6"/>
<dbReference type="UniPathway" id="UPA00275">
    <property type="reaction ID" value="UER00400"/>
</dbReference>
<dbReference type="GO" id="GO:0005829">
    <property type="term" value="C:cytosol"/>
    <property type="evidence" value="ECO:0007669"/>
    <property type="project" value="TreeGrafter"/>
</dbReference>
<dbReference type="GO" id="GO:0005525">
    <property type="term" value="F:GTP binding"/>
    <property type="evidence" value="ECO:0007669"/>
    <property type="project" value="UniProtKB-KW"/>
</dbReference>
<dbReference type="GO" id="GO:0003935">
    <property type="term" value="F:GTP cyclohydrolase II activity"/>
    <property type="evidence" value="ECO:0007669"/>
    <property type="project" value="UniProtKB-UniRule"/>
</dbReference>
<dbReference type="GO" id="GO:0008270">
    <property type="term" value="F:zinc ion binding"/>
    <property type="evidence" value="ECO:0007669"/>
    <property type="project" value="UniProtKB-UniRule"/>
</dbReference>
<dbReference type="GO" id="GO:0009231">
    <property type="term" value="P:riboflavin biosynthetic process"/>
    <property type="evidence" value="ECO:0007669"/>
    <property type="project" value="UniProtKB-UniRule"/>
</dbReference>
<dbReference type="CDD" id="cd00641">
    <property type="entry name" value="GTP_cyclohydro2"/>
    <property type="match status" value="1"/>
</dbReference>
<dbReference type="FunFam" id="3.40.50.10990:FF:000002">
    <property type="entry name" value="GTP cyclohydrolase-2"/>
    <property type="match status" value="1"/>
</dbReference>
<dbReference type="Gene3D" id="3.40.50.10990">
    <property type="entry name" value="GTP cyclohydrolase II"/>
    <property type="match status" value="1"/>
</dbReference>
<dbReference type="HAMAP" id="MF_00179">
    <property type="entry name" value="RibA"/>
    <property type="match status" value="1"/>
</dbReference>
<dbReference type="InterPro" id="IPR032677">
    <property type="entry name" value="GTP_cyclohydro_II"/>
</dbReference>
<dbReference type="InterPro" id="IPR000926">
    <property type="entry name" value="RibA"/>
</dbReference>
<dbReference type="InterPro" id="IPR036144">
    <property type="entry name" value="RibA-like_sf"/>
</dbReference>
<dbReference type="NCBIfam" id="NF001591">
    <property type="entry name" value="PRK00393.1"/>
    <property type="match status" value="1"/>
</dbReference>
<dbReference type="NCBIfam" id="TIGR00505">
    <property type="entry name" value="ribA"/>
    <property type="match status" value="1"/>
</dbReference>
<dbReference type="PANTHER" id="PTHR21327:SF18">
    <property type="entry name" value="3,4-DIHYDROXY-2-BUTANONE 4-PHOSPHATE SYNTHASE"/>
    <property type="match status" value="1"/>
</dbReference>
<dbReference type="PANTHER" id="PTHR21327">
    <property type="entry name" value="GTP CYCLOHYDROLASE II-RELATED"/>
    <property type="match status" value="1"/>
</dbReference>
<dbReference type="Pfam" id="PF00925">
    <property type="entry name" value="GTP_cyclohydro2"/>
    <property type="match status" value="1"/>
</dbReference>
<dbReference type="SUPFAM" id="SSF142695">
    <property type="entry name" value="RibA-like"/>
    <property type="match status" value="1"/>
</dbReference>
<feature type="chain" id="PRO_1000040575" description="GTP cyclohydrolase-2">
    <location>
        <begin position="1"/>
        <end position="205"/>
    </location>
</feature>
<feature type="active site" description="Proton acceptor" evidence="1">
    <location>
        <position position="126"/>
    </location>
</feature>
<feature type="active site" description="Nucleophile" evidence="1">
    <location>
        <position position="128"/>
    </location>
</feature>
<feature type="binding site" evidence="1">
    <location>
        <begin position="49"/>
        <end position="53"/>
    </location>
    <ligand>
        <name>GTP</name>
        <dbReference type="ChEBI" id="CHEBI:37565"/>
    </ligand>
</feature>
<feature type="binding site" evidence="1">
    <location>
        <position position="54"/>
    </location>
    <ligand>
        <name>Zn(2+)</name>
        <dbReference type="ChEBI" id="CHEBI:29105"/>
        <note>catalytic</note>
    </ligand>
</feature>
<feature type="binding site" evidence="1">
    <location>
        <position position="65"/>
    </location>
    <ligand>
        <name>Zn(2+)</name>
        <dbReference type="ChEBI" id="CHEBI:29105"/>
        <note>catalytic</note>
    </ligand>
</feature>
<feature type="binding site" evidence="1">
    <location>
        <position position="67"/>
    </location>
    <ligand>
        <name>Zn(2+)</name>
        <dbReference type="ChEBI" id="CHEBI:29105"/>
        <note>catalytic</note>
    </ligand>
</feature>
<feature type="binding site" evidence="1">
    <location>
        <position position="70"/>
    </location>
    <ligand>
        <name>GTP</name>
        <dbReference type="ChEBI" id="CHEBI:37565"/>
    </ligand>
</feature>
<feature type="binding site" evidence="1">
    <location>
        <begin position="92"/>
        <end position="94"/>
    </location>
    <ligand>
        <name>GTP</name>
        <dbReference type="ChEBI" id="CHEBI:37565"/>
    </ligand>
</feature>
<feature type="binding site" evidence="1">
    <location>
        <position position="114"/>
    </location>
    <ligand>
        <name>GTP</name>
        <dbReference type="ChEBI" id="CHEBI:37565"/>
    </ligand>
</feature>
<feature type="binding site" evidence="1">
    <location>
        <position position="149"/>
    </location>
    <ligand>
        <name>GTP</name>
        <dbReference type="ChEBI" id="CHEBI:37565"/>
    </ligand>
</feature>
<feature type="binding site" evidence="1">
    <location>
        <position position="154"/>
    </location>
    <ligand>
        <name>GTP</name>
        <dbReference type="ChEBI" id="CHEBI:37565"/>
    </ligand>
</feature>
<protein>
    <recommendedName>
        <fullName evidence="1">GTP cyclohydrolase-2</fullName>
        <ecNumber evidence="1">3.5.4.25</ecNumber>
    </recommendedName>
    <alternativeName>
        <fullName evidence="1">GTP cyclohydrolase II</fullName>
    </alternativeName>
</protein>
<keyword id="KW-0342">GTP-binding</keyword>
<keyword id="KW-0378">Hydrolase</keyword>
<keyword id="KW-0479">Metal-binding</keyword>
<keyword id="KW-0547">Nucleotide-binding</keyword>
<keyword id="KW-0686">Riboflavin biosynthesis</keyword>
<keyword id="KW-0862">Zinc</keyword>
<sequence length="205" mass="22351">MPVVFVAASKLPTPFATFTMHGFLDEATGREHVVLSLGDIADGQPVLGRLHSECLTGDALFSQRCDCGSQLEAALQAIAREGRGVLLYLRQEGRGIGLLNKIRAYELQDGGADTVEANERLGFAADQRDYAICLPMLEHLGVKSLRLMTNNPRKVKALTDMNIVVAERVPLHTGHNPHNRYYLATKAGKLGHMLGNEHQGEVPQA</sequence>
<evidence type="ECO:0000255" key="1">
    <source>
        <dbReference type="HAMAP-Rule" id="MF_00179"/>
    </source>
</evidence>
<gene>
    <name evidence="1" type="primary">ribA</name>
    <name type="ordered locus">Pput_0557</name>
</gene>
<accession>A5VXW5</accession>